<evidence type="ECO:0000255" key="1">
    <source>
        <dbReference type="HAMAP-Rule" id="MF_00519"/>
    </source>
</evidence>
<organism>
    <name type="scientific">Escherichia coli O45:K1 (strain S88 / ExPEC)</name>
    <dbReference type="NCBI Taxonomy" id="585035"/>
    <lineage>
        <taxon>Bacteria</taxon>
        <taxon>Pseudomonadati</taxon>
        <taxon>Pseudomonadota</taxon>
        <taxon>Gammaproteobacteria</taxon>
        <taxon>Enterobacterales</taxon>
        <taxon>Enterobacteriaceae</taxon>
        <taxon>Escherichia</taxon>
    </lineage>
</organism>
<sequence>MTIFDNYEVWFVIGSQHLYGPETLRQVTQHAEHVVNALNTEAKLPCKLVLKPLGTTPDEITAICRDANYDDRCAGLVVWLHTFSPAKMWINGLTMLNKPLLQFHTQFNAALPWDSIDMDFMNLNQTAHGGREFGFIGARMRQQHAVVTGHWQDKQAHERIGSWMRQAVSKQDTRHLKVCRFGDNMREVAVTDGDKVAAQIKFGFSVNTWAVGDLVQVVNSISDGDVNALVDEYESCYTMTPATQIHGEKRQNVLEAARIELGMKRFLEQGGFHAFTTTFEDLHGLKQLPGLAVQRLMQQGYGFAGEGDWKTAALLRIMKVMSTGLQGGTSFMEDYTYHFEKGNDLVLGSHMLEVCPSIAVEEKPILDVQHLGIGGKDDPARLIFNTQTGPAIVASLIDLGDRYRLLVNCIDTVKTPHSLPKLPVANALWKAQPDLPTASEAWILAGGAHHTVFSHALNLNDMRQFAEMHDIEITVIDNDTRLPAFKDALRWNEVYYGFRR</sequence>
<keyword id="KW-0054">Arabinose catabolism</keyword>
<keyword id="KW-0119">Carbohydrate metabolism</keyword>
<keyword id="KW-0413">Isomerase</keyword>
<keyword id="KW-0464">Manganese</keyword>
<keyword id="KW-0479">Metal-binding</keyword>
<keyword id="KW-1185">Reference proteome</keyword>
<gene>
    <name evidence="1" type="primary">araA</name>
    <name type="ordered locus">ECS88_0065</name>
</gene>
<reference key="1">
    <citation type="journal article" date="2009" name="PLoS Genet.">
        <title>Organised genome dynamics in the Escherichia coli species results in highly diverse adaptive paths.</title>
        <authorList>
            <person name="Touchon M."/>
            <person name="Hoede C."/>
            <person name="Tenaillon O."/>
            <person name="Barbe V."/>
            <person name="Baeriswyl S."/>
            <person name="Bidet P."/>
            <person name="Bingen E."/>
            <person name="Bonacorsi S."/>
            <person name="Bouchier C."/>
            <person name="Bouvet O."/>
            <person name="Calteau A."/>
            <person name="Chiapello H."/>
            <person name="Clermont O."/>
            <person name="Cruveiller S."/>
            <person name="Danchin A."/>
            <person name="Diard M."/>
            <person name="Dossat C."/>
            <person name="Karoui M.E."/>
            <person name="Frapy E."/>
            <person name="Garry L."/>
            <person name="Ghigo J.M."/>
            <person name="Gilles A.M."/>
            <person name="Johnson J."/>
            <person name="Le Bouguenec C."/>
            <person name="Lescat M."/>
            <person name="Mangenot S."/>
            <person name="Martinez-Jehanne V."/>
            <person name="Matic I."/>
            <person name="Nassif X."/>
            <person name="Oztas S."/>
            <person name="Petit M.A."/>
            <person name="Pichon C."/>
            <person name="Rouy Z."/>
            <person name="Ruf C.S."/>
            <person name="Schneider D."/>
            <person name="Tourret J."/>
            <person name="Vacherie B."/>
            <person name="Vallenet D."/>
            <person name="Medigue C."/>
            <person name="Rocha E.P.C."/>
            <person name="Denamur E."/>
        </authorList>
    </citation>
    <scope>NUCLEOTIDE SEQUENCE [LARGE SCALE GENOMIC DNA]</scope>
    <source>
        <strain>S88 / ExPEC</strain>
    </source>
</reference>
<proteinExistence type="inferred from homology"/>
<comment type="function">
    <text evidence="1">Catalyzes the conversion of L-arabinose to L-ribulose.</text>
</comment>
<comment type="catalytic activity">
    <reaction evidence="1">
        <text>beta-L-arabinopyranose = L-ribulose</text>
        <dbReference type="Rhea" id="RHEA:14821"/>
        <dbReference type="ChEBI" id="CHEBI:16880"/>
        <dbReference type="ChEBI" id="CHEBI:40886"/>
        <dbReference type="EC" id="5.3.1.4"/>
    </reaction>
</comment>
<comment type="cofactor">
    <cofactor evidence="1">
        <name>Mn(2+)</name>
        <dbReference type="ChEBI" id="CHEBI:29035"/>
    </cofactor>
    <text evidence="1">Binds 1 Mn(2+) ion per subunit.</text>
</comment>
<comment type="pathway">
    <text evidence="1">Carbohydrate degradation; L-arabinose degradation via L-ribulose; D-xylulose 5-phosphate from L-arabinose (bacterial route): step 1/3.</text>
</comment>
<comment type="subunit">
    <text evidence="1">Homohexamer.</text>
</comment>
<comment type="similarity">
    <text evidence="1">Belongs to the arabinose isomerase family.</text>
</comment>
<protein>
    <recommendedName>
        <fullName evidence="1">L-arabinose isomerase</fullName>
        <ecNumber evidence="1">5.3.1.4</ecNumber>
    </recommendedName>
</protein>
<dbReference type="EC" id="5.3.1.4" evidence="1"/>
<dbReference type="EMBL" id="CU928161">
    <property type="protein sequence ID" value="CAR01431.1"/>
    <property type="molecule type" value="Genomic_DNA"/>
</dbReference>
<dbReference type="RefSeq" id="WP_000151734.1">
    <property type="nucleotide sequence ID" value="NC_011742.1"/>
</dbReference>
<dbReference type="SMR" id="B7MAI5"/>
<dbReference type="GeneID" id="93777375"/>
<dbReference type="KEGG" id="ecz:ECS88_0065"/>
<dbReference type="HOGENOM" id="CLU_045663_0_0_6"/>
<dbReference type="UniPathway" id="UPA00145">
    <property type="reaction ID" value="UER00565"/>
</dbReference>
<dbReference type="Proteomes" id="UP000000747">
    <property type="component" value="Chromosome"/>
</dbReference>
<dbReference type="GO" id="GO:0005829">
    <property type="term" value="C:cytosol"/>
    <property type="evidence" value="ECO:0007669"/>
    <property type="project" value="TreeGrafter"/>
</dbReference>
<dbReference type="GO" id="GO:0008733">
    <property type="term" value="F:L-arabinose isomerase activity"/>
    <property type="evidence" value="ECO:0007669"/>
    <property type="project" value="UniProtKB-UniRule"/>
</dbReference>
<dbReference type="GO" id="GO:0030145">
    <property type="term" value="F:manganese ion binding"/>
    <property type="evidence" value="ECO:0007669"/>
    <property type="project" value="UniProtKB-UniRule"/>
</dbReference>
<dbReference type="GO" id="GO:0019569">
    <property type="term" value="P:L-arabinose catabolic process to xylulose 5-phosphate"/>
    <property type="evidence" value="ECO:0007669"/>
    <property type="project" value="UniProtKB-UniRule"/>
</dbReference>
<dbReference type="CDD" id="cd03557">
    <property type="entry name" value="L-arabinose_isomerase"/>
    <property type="match status" value="1"/>
</dbReference>
<dbReference type="FunFam" id="3.40.50.10940:FF:000001">
    <property type="entry name" value="L-arabinose isomerase"/>
    <property type="match status" value="1"/>
</dbReference>
<dbReference type="Gene3D" id="3.40.50.10940">
    <property type="match status" value="1"/>
</dbReference>
<dbReference type="HAMAP" id="MF_00519">
    <property type="entry name" value="Arabinose_Isome"/>
    <property type="match status" value="1"/>
</dbReference>
<dbReference type="InterPro" id="IPR024664">
    <property type="entry name" value="Ara_Isoase_C"/>
</dbReference>
<dbReference type="InterPro" id="IPR055390">
    <property type="entry name" value="AraA_central"/>
</dbReference>
<dbReference type="InterPro" id="IPR055389">
    <property type="entry name" value="AraA_N"/>
</dbReference>
<dbReference type="InterPro" id="IPR038583">
    <property type="entry name" value="AraA_N_sf"/>
</dbReference>
<dbReference type="InterPro" id="IPR004216">
    <property type="entry name" value="Fuc/Ara_isomerase_C"/>
</dbReference>
<dbReference type="InterPro" id="IPR009015">
    <property type="entry name" value="Fucose_isomerase_N/cen_sf"/>
</dbReference>
<dbReference type="InterPro" id="IPR003762">
    <property type="entry name" value="Lara_isomerase"/>
</dbReference>
<dbReference type="NCBIfam" id="NF002795">
    <property type="entry name" value="PRK02929.1"/>
    <property type="match status" value="1"/>
</dbReference>
<dbReference type="PANTHER" id="PTHR38464">
    <property type="entry name" value="L-ARABINOSE ISOMERASE"/>
    <property type="match status" value="1"/>
</dbReference>
<dbReference type="PANTHER" id="PTHR38464:SF1">
    <property type="entry name" value="L-ARABINOSE ISOMERASE"/>
    <property type="match status" value="1"/>
</dbReference>
<dbReference type="Pfam" id="PF24856">
    <property type="entry name" value="AraA_central"/>
    <property type="match status" value="1"/>
</dbReference>
<dbReference type="Pfam" id="PF02610">
    <property type="entry name" value="AraA_N"/>
    <property type="match status" value="1"/>
</dbReference>
<dbReference type="Pfam" id="PF11762">
    <property type="entry name" value="Arabinose_Iso_C"/>
    <property type="match status" value="1"/>
</dbReference>
<dbReference type="PIRSF" id="PIRSF001478">
    <property type="entry name" value="L-ara_isomerase"/>
    <property type="match status" value="1"/>
</dbReference>
<dbReference type="SUPFAM" id="SSF50443">
    <property type="entry name" value="FucI/AraA C-terminal domain-like"/>
    <property type="match status" value="1"/>
</dbReference>
<dbReference type="SUPFAM" id="SSF53743">
    <property type="entry name" value="FucI/AraA N-terminal and middle domains"/>
    <property type="match status" value="1"/>
</dbReference>
<accession>B7MAI5</accession>
<feature type="chain" id="PRO_1000127599" description="L-arabinose isomerase">
    <location>
        <begin position="1"/>
        <end position="500"/>
    </location>
</feature>
<feature type="binding site" evidence="1">
    <location>
        <position position="306"/>
    </location>
    <ligand>
        <name>Mn(2+)</name>
        <dbReference type="ChEBI" id="CHEBI:29035"/>
    </ligand>
</feature>
<feature type="binding site" evidence="1">
    <location>
        <position position="333"/>
    </location>
    <ligand>
        <name>Mn(2+)</name>
        <dbReference type="ChEBI" id="CHEBI:29035"/>
    </ligand>
</feature>
<feature type="binding site" evidence="1">
    <location>
        <position position="350"/>
    </location>
    <ligand>
        <name>Mn(2+)</name>
        <dbReference type="ChEBI" id="CHEBI:29035"/>
    </ligand>
</feature>
<feature type="binding site" evidence="1">
    <location>
        <position position="450"/>
    </location>
    <ligand>
        <name>Mn(2+)</name>
        <dbReference type="ChEBI" id="CHEBI:29035"/>
    </ligand>
</feature>
<name>ARAA_ECO45</name>